<dbReference type="EC" id="4.1.1.19"/>
<dbReference type="EMBL" id="AE004437">
    <property type="protein sequence ID" value="AAG20170.1"/>
    <property type="molecule type" value="Genomic_DNA"/>
</dbReference>
<dbReference type="PIR" id="F84350">
    <property type="entry name" value="F84350"/>
</dbReference>
<dbReference type="RefSeq" id="WP_010903471.1">
    <property type="nucleotide sequence ID" value="NC_002607.1"/>
</dbReference>
<dbReference type="SMR" id="Q9HNQ0"/>
<dbReference type="STRING" id="64091.VNG_1999H"/>
<dbReference type="PaxDb" id="64091-VNG_1999H"/>
<dbReference type="KEGG" id="hal:VNG_1999H"/>
<dbReference type="PATRIC" id="fig|64091.14.peg.1527"/>
<dbReference type="HOGENOM" id="CLU_134253_0_0_2"/>
<dbReference type="InParanoid" id="Q9HNQ0"/>
<dbReference type="OrthoDB" id="30748at2157"/>
<dbReference type="Proteomes" id="UP000000554">
    <property type="component" value="Chromosome"/>
</dbReference>
<dbReference type="GO" id="GO:0008792">
    <property type="term" value="F:arginine decarboxylase activity"/>
    <property type="evidence" value="ECO:0007669"/>
    <property type="project" value="UniProtKB-EC"/>
</dbReference>
<dbReference type="GO" id="GO:0006527">
    <property type="term" value="P:arginine catabolic process"/>
    <property type="evidence" value="ECO:0007669"/>
    <property type="project" value="InterPro"/>
</dbReference>
<dbReference type="Gene3D" id="3.50.20.10">
    <property type="entry name" value="Pyruvoyl-Dependent Histidine Decarboxylase, subunit B"/>
    <property type="match status" value="1"/>
</dbReference>
<dbReference type="InterPro" id="IPR016104">
    <property type="entry name" value="Pyr-dep_his/arg-deCO2ase"/>
</dbReference>
<dbReference type="InterPro" id="IPR016105">
    <property type="entry name" value="Pyr-dep_his/arg-deCO2ase_sand"/>
</dbReference>
<dbReference type="InterPro" id="IPR002724">
    <property type="entry name" value="Pyruvoyl-dep_arg_deCO2ase"/>
</dbReference>
<dbReference type="PANTHER" id="PTHR40438">
    <property type="entry name" value="PYRUVOYL-DEPENDENT ARGININE DECARBOXYLASE"/>
    <property type="match status" value="1"/>
</dbReference>
<dbReference type="PANTHER" id="PTHR40438:SF1">
    <property type="entry name" value="PYRUVOYL-DEPENDENT ARGININE DECARBOXYLASE"/>
    <property type="match status" value="1"/>
</dbReference>
<dbReference type="Pfam" id="PF01862">
    <property type="entry name" value="PvlArgDC"/>
    <property type="match status" value="1"/>
</dbReference>
<dbReference type="PIRSF" id="PIRSF005216">
    <property type="entry name" value="Pyruvoyl-dep_arg_deCO2ase"/>
    <property type="match status" value="1"/>
</dbReference>
<dbReference type="SFLD" id="SFLDG01170">
    <property type="entry name" value="Pyruvoyl-dependent_arginine_de"/>
    <property type="match status" value="1"/>
</dbReference>
<dbReference type="SFLD" id="SFLDS00055">
    <property type="entry name" value="Pyruvoyl-Dependent_Histidine/A"/>
    <property type="match status" value="1"/>
</dbReference>
<dbReference type="SUPFAM" id="SSF56271">
    <property type="entry name" value="Pyruvoyl-dependent histidine and arginine decarboxylases"/>
    <property type="match status" value="1"/>
</dbReference>
<gene>
    <name type="primary">pdaD</name>
    <name type="ordered locus">VNG_1999H</name>
</gene>
<accession>Q9HNQ0</accession>
<proteinExistence type="inferred from homology"/>
<protein>
    <recommendedName>
        <fullName>Pyruvoyl-dependent arginine decarboxylase</fullName>
        <shortName>PvlArgDC</shortName>
        <ecNumber>4.1.1.19</ecNumber>
    </recommendedName>
    <component>
        <recommendedName>
            <fullName>Pyruvoyl-dependent arginine decarboxylase subunit beta</fullName>
        </recommendedName>
    </component>
    <component>
        <recommendedName>
            <fullName>Pyruvoyl-dependent arginine decarboxylase subunit alpha</fullName>
        </recommendedName>
    </component>
</protein>
<evidence type="ECO:0000250" key="1"/>
<evidence type="ECO:0000305" key="2"/>
<keyword id="KW-0210">Decarboxylase</keyword>
<keyword id="KW-0456">Lyase</keyword>
<keyword id="KW-0670">Pyruvate</keyword>
<keyword id="KW-1185">Reference proteome</keyword>
<sequence length="160" mass="16364">MPRIRIAWGSGVAPTEMAAYDAALADANVHNYNLIRVSSVIPADATVSPVDTAPDLGPAGNTLTVVEARGQTAGPGQASAGLAWAPRDGAPGLFYEAADETTPDDVADRVTTGITAGMDVRDWDGVEPSVRTETVTADAGEHAAAVVIAAYGDSDPVFDQ</sequence>
<name>PDAD_HALSA</name>
<comment type="catalytic activity">
    <reaction>
        <text>L-arginine + H(+) = agmatine + CO2</text>
        <dbReference type="Rhea" id="RHEA:17641"/>
        <dbReference type="ChEBI" id="CHEBI:15378"/>
        <dbReference type="ChEBI" id="CHEBI:16526"/>
        <dbReference type="ChEBI" id="CHEBI:32682"/>
        <dbReference type="ChEBI" id="CHEBI:58145"/>
        <dbReference type="EC" id="4.1.1.19"/>
    </reaction>
</comment>
<comment type="cofactor">
    <cofactor evidence="1">
        <name>pyruvate</name>
        <dbReference type="ChEBI" id="CHEBI:15361"/>
    </cofactor>
    <text evidence="1">Binds 1 pyruvoyl group covalently per subunit.</text>
</comment>
<comment type="similarity">
    <text evidence="2">Belongs to the PdaD family.</text>
</comment>
<organism>
    <name type="scientific">Halobacterium salinarum (strain ATCC 700922 / JCM 11081 / NRC-1)</name>
    <name type="common">Halobacterium halobium</name>
    <dbReference type="NCBI Taxonomy" id="64091"/>
    <lineage>
        <taxon>Archaea</taxon>
        <taxon>Methanobacteriati</taxon>
        <taxon>Methanobacteriota</taxon>
        <taxon>Stenosarchaea group</taxon>
        <taxon>Halobacteria</taxon>
        <taxon>Halobacteriales</taxon>
        <taxon>Halobacteriaceae</taxon>
        <taxon>Halobacterium</taxon>
        <taxon>Halobacterium salinarum NRC-34001</taxon>
    </lineage>
</organism>
<reference key="1">
    <citation type="journal article" date="2000" name="Proc. Natl. Acad. Sci. U.S.A.">
        <title>Genome sequence of Halobacterium species NRC-1.</title>
        <authorList>
            <person name="Ng W.V."/>
            <person name="Kennedy S.P."/>
            <person name="Mahairas G.G."/>
            <person name="Berquist B."/>
            <person name="Pan M."/>
            <person name="Shukla H.D."/>
            <person name="Lasky S.R."/>
            <person name="Baliga N.S."/>
            <person name="Thorsson V."/>
            <person name="Sbrogna J."/>
            <person name="Swartzell S."/>
            <person name="Weir D."/>
            <person name="Hall J."/>
            <person name="Dahl T.A."/>
            <person name="Welti R."/>
            <person name="Goo Y.A."/>
            <person name="Leithauser B."/>
            <person name="Keller K."/>
            <person name="Cruz R."/>
            <person name="Danson M.J."/>
            <person name="Hough D.W."/>
            <person name="Maddocks D.G."/>
            <person name="Jablonski P.E."/>
            <person name="Krebs M.P."/>
            <person name="Angevine C.M."/>
            <person name="Dale H."/>
            <person name="Isenbarger T.A."/>
            <person name="Peck R.F."/>
            <person name="Pohlschroder M."/>
            <person name="Spudich J.L."/>
            <person name="Jung K.-H."/>
            <person name="Alam M."/>
            <person name="Freitas T."/>
            <person name="Hou S."/>
            <person name="Daniels C.J."/>
            <person name="Dennis P.P."/>
            <person name="Omer A.D."/>
            <person name="Ebhardt H."/>
            <person name="Lowe T.M."/>
            <person name="Liang P."/>
            <person name="Riley M."/>
            <person name="Hood L."/>
            <person name="DasSarma S."/>
        </authorList>
    </citation>
    <scope>NUCLEOTIDE SEQUENCE [LARGE SCALE GENOMIC DNA]</scope>
    <source>
        <strain>ATCC 700922 / JCM 11081 / NRC-1</strain>
    </source>
</reference>
<feature type="chain" id="PRO_0000023308" description="Pyruvoyl-dependent arginine decarboxylase subunit beta" evidence="1">
    <location>
        <begin position="1"/>
        <end position="38"/>
    </location>
</feature>
<feature type="chain" id="PRO_0000023309" description="Pyruvoyl-dependent arginine decarboxylase subunit alpha" evidence="1">
    <location>
        <begin position="39"/>
        <end position="160"/>
    </location>
</feature>
<feature type="site" description="Cleavage (non-hydrolytic)" evidence="1">
    <location>
        <begin position="38"/>
        <end position="39"/>
    </location>
</feature>
<feature type="modified residue" description="Pyruvic acid (Ser)" evidence="1">
    <location>
        <position position="39"/>
    </location>
</feature>